<dbReference type="EMBL" id="CP000853">
    <property type="protein sequence ID" value="ABW18117.1"/>
    <property type="molecule type" value="Genomic_DNA"/>
</dbReference>
<dbReference type="RefSeq" id="WP_012158431.1">
    <property type="nucleotide sequence ID" value="NC_009922.1"/>
</dbReference>
<dbReference type="SMR" id="A8MLK3"/>
<dbReference type="STRING" id="350688.Clos_0555"/>
<dbReference type="KEGG" id="aoe:Clos_0555"/>
<dbReference type="eggNOG" id="COG4843">
    <property type="taxonomic scope" value="Bacteria"/>
</dbReference>
<dbReference type="HOGENOM" id="CLU_106166_0_0_9"/>
<dbReference type="OrthoDB" id="48231at2"/>
<dbReference type="Proteomes" id="UP000000269">
    <property type="component" value="Chromosome"/>
</dbReference>
<dbReference type="GO" id="GO:0005886">
    <property type="term" value="C:plasma membrane"/>
    <property type="evidence" value="ECO:0007669"/>
    <property type="project" value="UniProtKB-SubCell"/>
</dbReference>
<dbReference type="CDD" id="cd16381">
    <property type="entry name" value="YitT_C_like_1"/>
    <property type="match status" value="1"/>
</dbReference>
<dbReference type="Gene3D" id="3.30.70.120">
    <property type="match status" value="1"/>
</dbReference>
<dbReference type="HAMAP" id="MF_01515">
    <property type="entry name" value="UPF0316"/>
    <property type="match status" value="1"/>
</dbReference>
<dbReference type="InterPro" id="IPR019264">
    <property type="entry name" value="DUF2179"/>
</dbReference>
<dbReference type="InterPro" id="IPR044035">
    <property type="entry name" value="DUF5698"/>
</dbReference>
<dbReference type="InterPro" id="IPR015867">
    <property type="entry name" value="N-reg_PII/ATP_PRibTrfase_C"/>
</dbReference>
<dbReference type="InterPro" id="IPR022930">
    <property type="entry name" value="UPF0316"/>
</dbReference>
<dbReference type="NCBIfam" id="NF003191">
    <property type="entry name" value="PRK04164.1-2"/>
    <property type="match status" value="1"/>
</dbReference>
<dbReference type="NCBIfam" id="NF003194">
    <property type="entry name" value="PRK04164.1-5"/>
    <property type="match status" value="1"/>
</dbReference>
<dbReference type="PANTHER" id="PTHR40060">
    <property type="entry name" value="UPF0316 PROTEIN YEBE"/>
    <property type="match status" value="1"/>
</dbReference>
<dbReference type="PANTHER" id="PTHR40060:SF1">
    <property type="entry name" value="UPF0316 PROTEIN YEBE"/>
    <property type="match status" value="1"/>
</dbReference>
<dbReference type="Pfam" id="PF10035">
    <property type="entry name" value="DUF2179"/>
    <property type="match status" value="1"/>
</dbReference>
<dbReference type="Pfam" id="PF18955">
    <property type="entry name" value="DUF5698"/>
    <property type="match status" value="1"/>
</dbReference>
<sequence length="172" mass="18988">MEALLGYLLIFVARLTDVSMATIRMIMVVKGKRVIAACIGFVEVSIYVVAIGKVLSGMDNPLNVLAYASGFATGNYVGIFLEEKMALGNIIAQVISDYEVEKLVEKLRNVGFGVTVIEGYGREGIRYILNVSLQRKHLSRLYQTVEEHDKKAFVTVTDARAIRGGYFAGMKK</sequence>
<comment type="subcellular location">
    <subcellularLocation>
        <location evidence="1">Cell membrane</location>
        <topology evidence="1">Multi-pass membrane protein</topology>
    </subcellularLocation>
</comment>
<comment type="similarity">
    <text evidence="1">Belongs to the UPF0316 family.</text>
</comment>
<reference key="1">
    <citation type="submission" date="2007-10" db="EMBL/GenBank/DDBJ databases">
        <title>Complete genome of Alkaliphilus oremlandii OhILAs.</title>
        <authorList>
            <person name="Copeland A."/>
            <person name="Lucas S."/>
            <person name="Lapidus A."/>
            <person name="Barry K."/>
            <person name="Detter J.C."/>
            <person name="Glavina del Rio T."/>
            <person name="Hammon N."/>
            <person name="Israni S."/>
            <person name="Dalin E."/>
            <person name="Tice H."/>
            <person name="Pitluck S."/>
            <person name="Chain P."/>
            <person name="Malfatti S."/>
            <person name="Shin M."/>
            <person name="Vergez L."/>
            <person name="Schmutz J."/>
            <person name="Larimer F."/>
            <person name="Land M."/>
            <person name="Hauser L."/>
            <person name="Kyrpides N."/>
            <person name="Mikhailova N."/>
            <person name="Stolz J.F."/>
            <person name="Dawson A."/>
            <person name="Fisher E."/>
            <person name="Crable B."/>
            <person name="Perera E."/>
            <person name="Lisak J."/>
            <person name="Ranganathan M."/>
            <person name="Basu P."/>
            <person name="Richardson P."/>
        </authorList>
    </citation>
    <scope>NUCLEOTIDE SEQUENCE [LARGE SCALE GENOMIC DNA]</scope>
    <source>
        <strain>OhILAs</strain>
    </source>
</reference>
<keyword id="KW-1003">Cell membrane</keyword>
<keyword id="KW-0472">Membrane</keyword>
<keyword id="KW-1185">Reference proteome</keyword>
<keyword id="KW-0812">Transmembrane</keyword>
<keyword id="KW-1133">Transmembrane helix</keyword>
<protein>
    <recommendedName>
        <fullName evidence="1">UPF0316 protein Clos_0555</fullName>
    </recommendedName>
</protein>
<gene>
    <name type="ordered locus">Clos_0555</name>
</gene>
<evidence type="ECO:0000255" key="1">
    <source>
        <dbReference type="HAMAP-Rule" id="MF_01515"/>
    </source>
</evidence>
<organism>
    <name type="scientific">Alkaliphilus oremlandii (strain OhILAs)</name>
    <name type="common">Clostridium oremlandii (strain OhILAs)</name>
    <dbReference type="NCBI Taxonomy" id="350688"/>
    <lineage>
        <taxon>Bacteria</taxon>
        <taxon>Bacillati</taxon>
        <taxon>Bacillota</taxon>
        <taxon>Clostridia</taxon>
        <taxon>Peptostreptococcales</taxon>
        <taxon>Natronincolaceae</taxon>
        <taxon>Alkaliphilus</taxon>
    </lineage>
</organism>
<proteinExistence type="inferred from homology"/>
<feature type="chain" id="PRO_0000318544" description="UPF0316 protein Clos_0555">
    <location>
        <begin position="1"/>
        <end position="172"/>
    </location>
</feature>
<feature type="transmembrane region" description="Helical" evidence="1">
    <location>
        <begin position="3"/>
        <end position="23"/>
    </location>
</feature>
<feature type="transmembrane region" description="Helical" evidence="1">
    <location>
        <begin position="34"/>
        <end position="54"/>
    </location>
</feature>
<feature type="transmembrane region" description="Helical" evidence="1">
    <location>
        <begin position="61"/>
        <end position="81"/>
    </location>
</feature>
<name>Y555_ALKOO</name>
<accession>A8MLK3</accession>